<gene>
    <name type="primary">TMEM213</name>
</gene>
<accession>A2RRL7</accession>
<accession>A4D1R3</accession>
<accession>C9JH49</accession>
<accession>C9JX41</accession>
<accession>C9K0P0</accession>
<sequence length="107" mass="11520">MQRLPAATRATLILSLAFASLHSACSAEASSSNSSSLTAHHPDPGTLEQCLNVDFCPQAARCCRTGVDEYGWIAAAVGWSLWFLTLILLCVDKLMKLTPDEPKDLQA</sequence>
<comment type="subcellular location">
    <subcellularLocation>
        <location evidence="3">Membrane</location>
        <topology evidence="3">Single-pass type I membrane protein</topology>
    </subcellularLocation>
</comment>
<comment type="alternative products">
    <event type="alternative splicing"/>
    <isoform>
        <id>A2RRL7-1</id>
        <name>1</name>
        <sequence type="displayed"/>
    </isoform>
    <isoform>
        <id>A2RRL7-2</id>
        <name>2</name>
        <sequence type="described" ref="VSP_039555"/>
    </isoform>
    <isoform>
        <id>A2RRL7-3</id>
        <name>3</name>
        <sequence type="described" ref="VSP_039556"/>
    </isoform>
    <isoform>
        <id>A2RRL7-4</id>
        <name>4</name>
        <sequence type="described" ref="VSP_039557"/>
    </isoform>
</comment>
<comment type="sequence caution" evidence="3">
    <conflict type="erroneous initiation">
        <sequence resource="EMBL-CDS" id="AAI31698"/>
    </conflict>
    <text>Extended N-terminus.</text>
</comment>
<protein>
    <recommendedName>
        <fullName>Transmembrane protein 213</fullName>
    </recommendedName>
</protein>
<organism>
    <name type="scientific">Homo sapiens</name>
    <name type="common">Human</name>
    <dbReference type="NCBI Taxonomy" id="9606"/>
    <lineage>
        <taxon>Eukaryota</taxon>
        <taxon>Metazoa</taxon>
        <taxon>Chordata</taxon>
        <taxon>Craniata</taxon>
        <taxon>Vertebrata</taxon>
        <taxon>Euteleostomi</taxon>
        <taxon>Mammalia</taxon>
        <taxon>Eutheria</taxon>
        <taxon>Euarchontoglires</taxon>
        <taxon>Primates</taxon>
        <taxon>Haplorrhini</taxon>
        <taxon>Catarrhini</taxon>
        <taxon>Hominidae</taxon>
        <taxon>Homo</taxon>
    </lineage>
</organism>
<keyword id="KW-0025">Alternative splicing</keyword>
<keyword id="KW-0472">Membrane</keyword>
<keyword id="KW-1185">Reference proteome</keyword>
<keyword id="KW-0732">Signal</keyword>
<keyword id="KW-0812">Transmembrane</keyword>
<keyword id="KW-1133">Transmembrane helix</keyword>
<dbReference type="EMBL" id="AC018663">
    <property type="status" value="NOT_ANNOTATED_CDS"/>
    <property type="molecule type" value="Genomic_DNA"/>
</dbReference>
<dbReference type="EMBL" id="CH236950">
    <property type="protein sequence ID" value="EAL24042.1"/>
    <property type="molecule type" value="Genomic_DNA"/>
</dbReference>
<dbReference type="EMBL" id="CH471070">
    <property type="protein sequence ID" value="EAW83898.1"/>
    <property type="molecule type" value="Genomic_DNA"/>
</dbReference>
<dbReference type="EMBL" id="BC131697">
    <property type="protein sequence ID" value="AAI31698.1"/>
    <property type="status" value="ALT_INIT"/>
    <property type="molecule type" value="mRNA"/>
</dbReference>
<dbReference type="CCDS" id="CCDS47722.1">
    <molecule id="A2RRL7-1"/>
</dbReference>
<dbReference type="RefSeq" id="NP_001078898.1">
    <molecule id="A2RRL7-1"/>
    <property type="nucleotide sequence ID" value="NM_001085429.2"/>
</dbReference>
<dbReference type="RefSeq" id="XP_005250224.1">
    <property type="nucleotide sequence ID" value="XM_005250167.3"/>
</dbReference>
<dbReference type="SMR" id="A2RRL7"/>
<dbReference type="BioGRID" id="127567">
    <property type="interactions" value="19"/>
</dbReference>
<dbReference type="FunCoup" id="A2RRL7">
    <property type="interactions" value="5"/>
</dbReference>
<dbReference type="IntAct" id="A2RRL7">
    <property type="interactions" value="5"/>
</dbReference>
<dbReference type="STRING" id="9606.ENSP00000390407"/>
<dbReference type="PhosphoSitePlus" id="A2RRL7"/>
<dbReference type="BioMuta" id="TMEM213"/>
<dbReference type="PaxDb" id="9606-ENSP00000390407"/>
<dbReference type="PeptideAtlas" id="A2RRL7"/>
<dbReference type="ProteomicsDB" id="472">
    <molecule id="A2RRL7-1"/>
</dbReference>
<dbReference type="ProteomicsDB" id="473">
    <molecule id="A2RRL7-2"/>
</dbReference>
<dbReference type="ProteomicsDB" id="474">
    <molecule id="A2RRL7-3"/>
</dbReference>
<dbReference type="ProteomicsDB" id="475">
    <molecule id="A2RRL7-4"/>
</dbReference>
<dbReference type="Antibodypedia" id="64747">
    <property type="antibodies" value="35 antibodies from 11 providers"/>
</dbReference>
<dbReference type="DNASU" id="155006"/>
<dbReference type="Ensembl" id="ENST00000397602.7">
    <molecule id="A2RRL7-3"/>
    <property type="protein sequence ID" value="ENSP00000380727.3"/>
    <property type="gene ID" value="ENSG00000214128.11"/>
</dbReference>
<dbReference type="Ensembl" id="ENST00000413208.1">
    <molecule id="A2RRL7-4"/>
    <property type="protein sequence ID" value="ENSP00000401570.1"/>
    <property type="gene ID" value="ENSG00000214128.11"/>
</dbReference>
<dbReference type="Ensembl" id="ENST00000442682.7">
    <molecule id="A2RRL7-1"/>
    <property type="protein sequence ID" value="ENSP00000390407.2"/>
    <property type="gene ID" value="ENSG00000214128.11"/>
</dbReference>
<dbReference type="Ensembl" id="ENST00000458494.1">
    <molecule id="A2RRL7-2"/>
    <property type="protein sequence ID" value="ENSP00000393891.1"/>
    <property type="gene ID" value="ENSG00000214128.11"/>
</dbReference>
<dbReference type="GeneID" id="155006"/>
<dbReference type="KEGG" id="hsa:155006"/>
<dbReference type="MANE-Select" id="ENST00000442682.7">
    <property type="protein sequence ID" value="ENSP00000390407.2"/>
    <property type="RefSeq nucleotide sequence ID" value="NM_001085429.2"/>
    <property type="RefSeq protein sequence ID" value="NP_001078898.1"/>
</dbReference>
<dbReference type="UCSC" id="uc010lna.5">
    <molecule id="A2RRL7-1"/>
    <property type="organism name" value="human"/>
</dbReference>
<dbReference type="AGR" id="HGNC:27220"/>
<dbReference type="CTD" id="155006"/>
<dbReference type="DisGeNET" id="155006"/>
<dbReference type="GeneCards" id="TMEM213"/>
<dbReference type="HGNC" id="HGNC:27220">
    <property type="gene designation" value="TMEM213"/>
</dbReference>
<dbReference type="HPA" id="ENSG00000214128">
    <property type="expression patterns" value="Group enriched (kidney, salivary gland)"/>
</dbReference>
<dbReference type="neXtProt" id="NX_A2RRL7"/>
<dbReference type="OpenTargets" id="ENSG00000214128"/>
<dbReference type="PharmGKB" id="PA162406494"/>
<dbReference type="VEuPathDB" id="HostDB:ENSG00000214128"/>
<dbReference type="eggNOG" id="ENOG502SA74">
    <property type="taxonomic scope" value="Eukaryota"/>
</dbReference>
<dbReference type="GeneTree" id="ENSGT00390000014153"/>
<dbReference type="HOGENOM" id="CLU_143213_0_0_1"/>
<dbReference type="InParanoid" id="A2RRL7"/>
<dbReference type="OMA" id="NIDFCPQ"/>
<dbReference type="OrthoDB" id="9949160at2759"/>
<dbReference type="PAN-GO" id="A2RRL7">
    <property type="GO annotations" value="0 GO annotations based on evolutionary models"/>
</dbReference>
<dbReference type="PhylomeDB" id="A2RRL7"/>
<dbReference type="TreeFam" id="TF336187"/>
<dbReference type="PathwayCommons" id="A2RRL7"/>
<dbReference type="SignaLink" id="A2RRL7"/>
<dbReference type="BioGRID-ORCS" id="155006">
    <property type="hits" value="11 hits in 1141 CRISPR screens"/>
</dbReference>
<dbReference type="ChiTaRS" id="TMEM213">
    <property type="organism name" value="human"/>
</dbReference>
<dbReference type="GenomeRNAi" id="155006"/>
<dbReference type="Pharos" id="A2RRL7">
    <property type="development level" value="Tdark"/>
</dbReference>
<dbReference type="PRO" id="PR:A2RRL7"/>
<dbReference type="Proteomes" id="UP000005640">
    <property type="component" value="Chromosome 7"/>
</dbReference>
<dbReference type="RNAct" id="A2RRL7">
    <property type="molecule type" value="protein"/>
</dbReference>
<dbReference type="Bgee" id="ENSG00000214128">
    <property type="expression patterns" value="Expressed in kidney epithelium and 79 other cell types or tissues"/>
</dbReference>
<dbReference type="GO" id="GO:0016020">
    <property type="term" value="C:membrane"/>
    <property type="evidence" value="ECO:0007669"/>
    <property type="project" value="UniProtKB-SubCell"/>
</dbReference>
<dbReference type="InterPro" id="IPR028121">
    <property type="entry name" value="TMEM213"/>
</dbReference>
<dbReference type="PANTHER" id="PTHR36293">
    <property type="entry name" value="TRANSMEMBRANE PROTEIN 213"/>
    <property type="match status" value="1"/>
</dbReference>
<dbReference type="PANTHER" id="PTHR36293:SF1">
    <property type="entry name" value="TRANSMEMBRANE PROTEIN 213"/>
    <property type="match status" value="1"/>
</dbReference>
<dbReference type="Pfam" id="PF15192">
    <property type="entry name" value="TMEM213"/>
    <property type="match status" value="1"/>
</dbReference>
<evidence type="ECO:0000255" key="1"/>
<evidence type="ECO:0000303" key="2">
    <source>
    </source>
</evidence>
<evidence type="ECO:0000305" key="3"/>
<reference key="1">
    <citation type="journal article" date="2003" name="Nature">
        <title>The DNA sequence of human chromosome 7.</title>
        <authorList>
            <person name="Hillier L.W."/>
            <person name="Fulton R.S."/>
            <person name="Fulton L.A."/>
            <person name="Graves T.A."/>
            <person name="Pepin K.H."/>
            <person name="Wagner-McPherson C."/>
            <person name="Layman D."/>
            <person name="Maas J."/>
            <person name="Jaeger S."/>
            <person name="Walker R."/>
            <person name="Wylie K."/>
            <person name="Sekhon M."/>
            <person name="Becker M.C."/>
            <person name="O'Laughlin M.D."/>
            <person name="Schaller M.E."/>
            <person name="Fewell G.A."/>
            <person name="Delehaunty K.D."/>
            <person name="Miner T.L."/>
            <person name="Nash W.E."/>
            <person name="Cordes M."/>
            <person name="Du H."/>
            <person name="Sun H."/>
            <person name="Edwards J."/>
            <person name="Bradshaw-Cordum H."/>
            <person name="Ali J."/>
            <person name="Andrews S."/>
            <person name="Isak A."/>
            <person name="Vanbrunt A."/>
            <person name="Nguyen C."/>
            <person name="Du F."/>
            <person name="Lamar B."/>
            <person name="Courtney L."/>
            <person name="Kalicki J."/>
            <person name="Ozersky P."/>
            <person name="Bielicki L."/>
            <person name="Scott K."/>
            <person name="Holmes A."/>
            <person name="Harkins R."/>
            <person name="Harris A."/>
            <person name="Strong C.M."/>
            <person name="Hou S."/>
            <person name="Tomlinson C."/>
            <person name="Dauphin-Kohlberg S."/>
            <person name="Kozlowicz-Reilly A."/>
            <person name="Leonard S."/>
            <person name="Rohlfing T."/>
            <person name="Rock S.M."/>
            <person name="Tin-Wollam A.-M."/>
            <person name="Abbott A."/>
            <person name="Minx P."/>
            <person name="Maupin R."/>
            <person name="Strowmatt C."/>
            <person name="Latreille P."/>
            <person name="Miller N."/>
            <person name="Johnson D."/>
            <person name="Murray J."/>
            <person name="Woessner J.P."/>
            <person name="Wendl M.C."/>
            <person name="Yang S.-P."/>
            <person name="Schultz B.R."/>
            <person name="Wallis J.W."/>
            <person name="Spieth J."/>
            <person name="Bieri T.A."/>
            <person name="Nelson J.O."/>
            <person name="Berkowicz N."/>
            <person name="Wohldmann P.E."/>
            <person name="Cook L.L."/>
            <person name="Hickenbotham M.T."/>
            <person name="Eldred J."/>
            <person name="Williams D."/>
            <person name="Bedell J.A."/>
            <person name="Mardis E.R."/>
            <person name="Clifton S.W."/>
            <person name="Chissoe S.L."/>
            <person name="Marra M.A."/>
            <person name="Raymond C."/>
            <person name="Haugen E."/>
            <person name="Gillett W."/>
            <person name="Zhou Y."/>
            <person name="James R."/>
            <person name="Phelps K."/>
            <person name="Iadanoto S."/>
            <person name="Bubb K."/>
            <person name="Simms E."/>
            <person name="Levy R."/>
            <person name="Clendenning J."/>
            <person name="Kaul R."/>
            <person name="Kent W.J."/>
            <person name="Furey T.S."/>
            <person name="Baertsch R.A."/>
            <person name="Brent M.R."/>
            <person name="Keibler E."/>
            <person name="Flicek P."/>
            <person name="Bork P."/>
            <person name="Suyama M."/>
            <person name="Bailey J.A."/>
            <person name="Portnoy M.E."/>
            <person name="Torrents D."/>
            <person name="Chinwalla A.T."/>
            <person name="Gish W.R."/>
            <person name="Eddy S.R."/>
            <person name="McPherson J.D."/>
            <person name="Olson M.V."/>
            <person name="Eichler E.E."/>
            <person name="Green E.D."/>
            <person name="Waterston R.H."/>
            <person name="Wilson R.K."/>
        </authorList>
    </citation>
    <scope>NUCLEOTIDE SEQUENCE [LARGE SCALE GENOMIC DNA]</scope>
</reference>
<reference key="2">
    <citation type="journal article" date="2003" name="Science">
        <title>Human chromosome 7: DNA sequence and biology.</title>
        <authorList>
            <person name="Scherer S.W."/>
            <person name="Cheung J."/>
            <person name="MacDonald J.R."/>
            <person name="Osborne L.R."/>
            <person name="Nakabayashi K."/>
            <person name="Herbrick J.-A."/>
            <person name="Carson A.R."/>
            <person name="Parker-Katiraee L."/>
            <person name="Skaug J."/>
            <person name="Khaja R."/>
            <person name="Zhang J."/>
            <person name="Hudek A.K."/>
            <person name="Li M."/>
            <person name="Haddad M."/>
            <person name="Duggan G.E."/>
            <person name="Fernandez B.A."/>
            <person name="Kanematsu E."/>
            <person name="Gentles S."/>
            <person name="Christopoulos C.C."/>
            <person name="Choufani S."/>
            <person name="Kwasnicka D."/>
            <person name="Zheng X.H."/>
            <person name="Lai Z."/>
            <person name="Nusskern D.R."/>
            <person name="Zhang Q."/>
            <person name="Gu Z."/>
            <person name="Lu F."/>
            <person name="Zeesman S."/>
            <person name="Nowaczyk M.J."/>
            <person name="Teshima I."/>
            <person name="Chitayat D."/>
            <person name="Shuman C."/>
            <person name="Weksberg R."/>
            <person name="Zackai E.H."/>
            <person name="Grebe T.A."/>
            <person name="Cox S.R."/>
            <person name="Kirkpatrick S.J."/>
            <person name="Rahman N."/>
            <person name="Friedman J.M."/>
            <person name="Heng H.H.Q."/>
            <person name="Pelicci P.G."/>
            <person name="Lo-Coco F."/>
            <person name="Belloni E."/>
            <person name="Shaffer L.G."/>
            <person name="Pober B."/>
            <person name="Morton C.C."/>
            <person name="Gusella J.F."/>
            <person name="Bruns G.A.P."/>
            <person name="Korf B.R."/>
            <person name="Quade B.J."/>
            <person name="Ligon A.H."/>
            <person name="Ferguson H."/>
            <person name="Higgins A.W."/>
            <person name="Leach N.T."/>
            <person name="Herrick S.R."/>
            <person name="Lemyre E."/>
            <person name="Farra C.G."/>
            <person name="Kim H.-G."/>
            <person name="Summers A.M."/>
            <person name="Gripp K.W."/>
            <person name="Roberts W."/>
            <person name="Szatmari P."/>
            <person name="Winsor E.J.T."/>
            <person name="Grzeschik K.-H."/>
            <person name="Teebi A."/>
            <person name="Minassian B.A."/>
            <person name="Kere J."/>
            <person name="Armengol L."/>
            <person name="Pujana M.A."/>
            <person name="Estivill X."/>
            <person name="Wilson M.D."/>
            <person name="Koop B.F."/>
            <person name="Tosi S."/>
            <person name="Moore G.E."/>
            <person name="Boright A.P."/>
            <person name="Zlotorynski E."/>
            <person name="Kerem B."/>
            <person name="Kroisel P.M."/>
            <person name="Petek E."/>
            <person name="Oscier D.G."/>
            <person name="Mould S.J."/>
            <person name="Doehner H."/>
            <person name="Doehner K."/>
            <person name="Rommens J.M."/>
            <person name="Vincent J.B."/>
            <person name="Venter J.C."/>
            <person name="Li P.W."/>
            <person name="Mural R.J."/>
            <person name="Adams M.D."/>
            <person name="Tsui L.-C."/>
        </authorList>
    </citation>
    <scope>NUCLEOTIDE SEQUENCE [LARGE SCALE GENOMIC DNA]</scope>
</reference>
<reference key="3">
    <citation type="submission" date="2005-07" db="EMBL/GenBank/DDBJ databases">
        <authorList>
            <person name="Mural R.J."/>
            <person name="Istrail S."/>
            <person name="Sutton G.G."/>
            <person name="Florea L."/>
            <person name="Halpern A.L."/>
            <person name="Mobarry C.M."/>
            <person name="Lippert R."/>
            <person name="Walenz B."/>
            <person name="Shatkay H."/>
            <person name="Dew I."/>
            <person name="Miller J.R."/>
            <person name="Flanigan M.J."/>
            <person name="Edwards N.J."/>
            <person name="Bolanos R."/>
            <person name="Fasulo D."/>
            <person name="Halldorsson B.V."/>
            <person name="Hannenhalli S."/>
            <person name="Turner R."/>
            <person name="Yooseph S."/>
            <person name="Lu F."/>
            <person name="Nusskern D.R."/>
            <person name="Shue B.C."/>
            <person name="Zheng X.H."/>
            <person name="Zhong F."/>
            <person name="Delcher A.L."/>
            <person name="Huson D.H."/>
            <person name="Kravitz S.A."/>
            <person name="Mouchard L."/>
            <person name="Reinert K."/>
            <person name="Remington K.A."/>
            <person name="Clark A.G."/>
            <person name="Waterman M.S."/>
            <person name="Eichler E.E."/>
            <person name="Adams M.D."/>
            <person name="Hunkapiller M.W."/>
            <person name="Myers E.W."/>
            <person name="Venter J.C."/>
        </authorList>
    </citation>
    <scope>NUCLEOTIDE SEQUENCE [LARGE SCALE GENOMIC DNA]</scope>
</reference>
<reference key="4">
    <citation type="journal article" date="2004" name="Genome Res.">
        <title>The status, quality, and expansion of the NIH full-length cDNA project: the Mammalian Gene Collection (MGC).</title>
        <authorList>
            <consortium name="The MGC Project Team"/>
        </authorList>
    </citation>
    <scope>NUCLEOTIDE SEQUENCE [LARGE SCALE MRNA] (ISOFORM 3)</scope>
</reference>
<name>TM213_HUMAN</name>
<proteinExistence type="inferred from homology"/>
<feature type="signal peptide" evidence="1">
    <location>
        <begin position="1"/>
        <end position="27"/>
    </location>
</feature>
<feature type="chain" id="PRO_0000337054" description="Transmembrane protein 213">
    <location>
        <begin position="28"/>
        <end position="107"/>
    </location>
</feature>
<feature type="topological domain" description="Extracellular" evidence="1">
    <location>
        <begin position="28"/>
        <end position="70"/>
    </location>
</feature>
<feature type="transmembrane region" description="Helical" evidence="1">
    <location>
        <begin position="71"/>
        <end position="91"/>
    </location>
</feature>
<feature type="topological domain" description="Cytoplasmic" evidence="1">
    <location>
        <begin position="92"/>
        <end position="107"/>
    </location>
</feature>
<feature type="splice variant" id="VSP_039555" description="In isoform 2." evidence="3">
    <original>EASSSNSSSLTAHHPDPGTLEQCLN</original>
    <variation>D</variation>
    <location>
        <begin position="28"/>
        <end position="52"/>
    </location>
</feature>
<feature type="splice variant" id="VSP_039556" description="In isoform 3." evidence="2">
    <location>
        <position position="28"/>
    </location>
</feature>
<feature type="splice variant" id="VSP_039557" description="In isoform 4." evidence="3">
    <original>NVDFCPQAARCCRTGVDEYGWIAAAVGWSLWFLTLILLCVDKLMKLTPDEPKDLQA</original>
    <variation>RSGYLANLRGEADQLWKFCTVLCFWESRRSSSRIALMREAEEWPGWRSSVELVG</variation>
    <location>
        <begin position="52"/>
        <end position="107"/>
    </location>
</feature>